<proteinExistence type="inferred from homology"/>
<reference key="1">
    <citation type="journal article" date="2006" name="Nat. Biotechnol.">
        <title>Complete genome sequence of the entomopathogenic and metabolically versatile soil bacterium Pseudomonas entomophila.</title>
        <authorList>
            <person name="Vodovar N."/>
            <person name="Vallenet D."/>
            <person name="Cruveiller S."/>
            <person name="Rouy Z."/>
            <person name="Barbe V."/>
            <person name="Acosta C."/>
            <person name="Cattolico L."/>
            <person name="Jubin C."/>
            <person name="Lajus A."/>
            <person name="Segurens B."/>
            <person name="Vacherie B."/>
            <person name="Wincker P."/>
            <person name="Weissenbach J."/>
            <person name="Lemaitre B."/>
            <person name="Medigue C."/>
            <person name="Boccard F."/>
        </authorList>
    </citation>
    <scope>NUCLEOTIDE SEQUENCE [LARGE SCALE GENOMIC DNA]</scope>
    <source>
        <strain>L48</strain>
    </source>
</reference>
<evidence type="ECO:0000255" key="1">
    <source>
        <dbReference type="HAMAP-Rule" id="MF_00046"/>
    </source>
</evidence>
<protein>
    <recommendedName>
        <fullName evidence="1">UDP-N-acetylmuramate--L-alanine ligase</fullName>
        <ecNumber evidence="1">6.3.2.8</ecNumber>
    </recommendedName>
    <alternativeName>
        <fullName evidence="1">UDP-N-acetylmuramoyl-L-alanine synthetase</fullName>
    </alternativeName>
</protein>
<sequence length="482" mass="52085">MVESQKAMPQPKMGRIRRIHFVGIGGVGMCGIAEVLLNLGYEVSGSDLKASPVTERLESFGAEIFVGHRAENAASADVLVVSSAINPANPEVATALERRIPVVPRAEMLAELMRYRHGVAVAGTHGKTTTTSLLASVFAAGGLDPTFVIGGRLTAAGTNAQLGTSRYLIAEADESDASFLHLQPMVAVVTNIDADHMATYEGDFNKLKKTFVEFLHNLPFYGLAVMCLDDPVVREILPQVKRPTVTYGFSEEADIRAINVRQQGMQTHFTVLRRDCEPLEVSVNMPGNHNVLNALATIAIATDEGISDEAIVQGLSGFQGVGRRFQVYGELPVEGGSVMLVDDYGHHPTEVAAVIKAVRGGWPSRRLVIVYQPHRYSRTRDLYDDFVQVLGDANVLLLMEVYPAGEEPIPGADSRQLCHSIRQRGKLDPIYIERGAELAPLVKPLLRAGDILICQGAGDVGGLAPQLMKSPLFAGAKQEKSK</sequence>
<keyword id="KW-0067">ATP-binding</keyword>
<keyword id="KW-0131">Cell cycle</keyword>
<keyword id="KW-0132">Cell division</keyword>
<keyword id="KW-0133">Cell shape</keyword>
<keyword id="KW-0961">Cell wall biogenesis/degradation</keyword>
<keyword id="KW-0963">Cytoplasm</keyword>
<keyword id="KW-0436">Ligase</keyword>
<keyword id="KW-0547">Nucleotide-binding</keyword>
<keyword id="KW-0573">Peptidoglycan synthesis</keyword>
<accession>Q1I5B9</accession>
<dbReference type="EC" id="6.3.2.8" evidence="1"/>
<dbReference type="EMBL" id="CT573326">
    <property type="protein sequence ID" value="CAK17166.1"/>
    <property type="molecule type" value="Genomic_DNA"/>
</dbReference>
<dbReference type="RefSeq" id="WP_011535536.1">
    <property type="nucleotide sequence ID" value="NC_008027.1"/>
</dbReference>
<dbReference type="SMR" id="Q1I5B9"/>
<dbReference type="STRING" id="384676.PSEEN4484"/>
<dbReference type="GeneID" id="32807480"/>
<dbReference type="KEGG" id="pen:PSEEN4484"/>
<dbReference type="eggNOG" id="COG0773">
    <property type="taxonomic scope" value="Bacteria"/>
</dbReference>
<dbReference type="HOGENOM" id="CLU_028104_2_2_6"/>
<dbReference type="OrthoDB" id="9804126at2"/>
<dbReference type="UniPathway" id="UPA00219"/>
<dbReference type="Proteomes" id="UP000000658">
    <property type="component" value="Chromosome"/>
</dbReference>
<dbReference type="GO" id="GO:0005737">
    <property type="term" value="C:cytoplasm"/>
    <property type="evidence" value="ECO:0007669"/>
    <property type="project" value="UniProtKB-SubCell"/>
</dbReference>
<dbReference type="GO" id="GO:0005524">
    <property type="term" value="F:ATP binding"/>
    <property type="evidence" value="ECO:0007669"/>
    <property type="project" value="UniProtKB-UniRule"/>
</dbReference>
<dbReference type="GO" id="GO:0008763">
    <property type="term" value="F:UDP-N-acetylmuramate-L-alanine ligase activity"/>
    <property type="evidence" value="ECO:0007669"/>
    <property type="project" value="UniProtKB-UniRule"/>
</dbReference>
<dbReference type="GO" id="GO:0051301">
    <property type="term" value="P:cell division"/>
    <property type="evidence" value="ECO:0007669"/>
    <property type="project" value="UniProtKB-KW"/>
</dbReference>
<dbReference type="GO" id="GO:0071555">
    <property type="term" value="P:cell wall organization"/>
    <property type="evidence" value="ECO:0007669"/>
    <property type="project" value="UniProtKB-KW"/>
</dbReference>
<dbReference type="GO" id="GO:0009252">
    <property type="term" value="P:peptidoglycan biosynthetic process"/>
    <property type="evidence" value="ECO:0007669"/>
    <property type="project" value="UniProtKB-UniRule"/>
</dbReference>
<dbReference type="GO" id="GO:0008360">
    <property type="term" value="P:regulation of cell shape"/>
    <property type="evidence" value="ECO:0007669"/>
    <property type="project" value="UniProtKB-KW"/>
</dbReference>
<dbReference type="FunFam" id="3.40.1190.10:FF:000001">
    <property type="entry name" value="UDP-N-acetylmuramate--L-alanine ligase"/>
    <property type="match status" value="1"/>
</dbReference>
<dbReference type="Gene3D" id="3.90.190.20">
    <property type="entry name" value="Mur ligase, C-terminal domain"/>
    <property type="match status" value="1"/>
</dbReference>
<dbReference type="Gene3D" id="3.40.1190.10">
    <property type="entry name" value="Mur-like, catalytic domain"/>
    <property type="match status" value="1"/>
</dbReference>
<dbReference type="Gene3D" id="3.40.50.720">
    <property type="entry name" value="NAD(P)-binding Rossmann-like Domain"/>
    <property type="match status" value="1"/>
</dbReference>
<dbReference type="HAMAP" id="MF_00046">
    <property type="entry name" value="MurC"/>
    <property type="match status" value="1"/>
</dbReference>
<dbReference type="InterPro" id="IPR036565">
    <property type="entry name" value="Mur-like_cat_sf"/>
</dbReference>
<dbReference type="InterPro" id="IPR004101">
    <property type="entry name" value="Mur_ligase_C"/>
</dbReference>
<dbReference type="InterPro" id="IPR036615">
    <property type="entry name" value="Mur_ligase_C_dom_sf"/>
</dbReference>
<dbReference type="InterPro" id="IPR013221">
    <property type="entry name" value="Mur_ligase_cen"/>
</dbReference>
<dbReference type="InterPro" id="IPR000713">
    <property type="entry name" value="Mur_ligase_N"/>
</dbReference>
<dbReference type="InterPro" id="IPR050061">
    <property type="entry name" value="MurCDEF_pg_biosynth"/>
</dbReference>
<dbReference type="InterPro" id="IPR005758">
    <property type="entry name" value="UDP-N-AcMur_Ala_ligase_MurC"/>
</dbReference>
<dbReference type="NCBIfam" id="TIGR01082">
    <property type="entry name" value="murC"/>
    <property type="match status" value="1"/>
</dbReference>
<dbReference type="PANTHER" id="PTHR43445:SF3">
    <property type="entry name" value="UDP-N-ACETYLMURAMATE--L-ALANINE LIGASE"/>
    <property type="match status" value="1"/>
</dbReference>
<dbReference type="PANTHER" id="PTHR43445">
    <property type="entry name" value="UDP-N-ACETYLMURAMATE--L-ALANINE LIGASE-RELATED"/>
    <property type="match status" value="1"/>
</dbReference>
<dbReference type="Pfam" id="PF01225">
    <property type="entry name" value="Mur_ligase"/>
    <property type="match status" value="1"/>
</dbReference>
<dbReference type="Pfam" id="PF02875">
    <property type="entry name" value="Mur_ligase_C"/>
    <property type="match status" value="1"/>
</dbReference>
<dbReference type="Pfam" id="PF08245">
    <property type="entry name" value="Mur_ligase_M"/>
    <property type="match status" value="1"/>
</dbReference>
<dbReference type="SUPFAM" id="SSF51984">
    <property type="entry name" value="MurCD N-terminal domain"/>
    <property type="match status" value="1"/>
</dbReference>
<dbReference type="SUPFAM" id="SSF53623">
    <property type="entry name" value="MurD-like peptide ligases, catalytic domain"/>
    <property type="match status" value="1"/>
</dbReference>
<dbReference type="SUPFAM" id="SSF53244">
    <property type="entry name" value="MurD-like peptide ligases, peptide-binding domain"/>
    <property type="match status" value="1"/>
</dbReference>
<comment type="function">
    <text evidence="1">Cell wall formation.</text>
</comment>
<comment type="catalytic activity">
    <reaction evidence="1">
        <text>UDP-N-acetyl-alpha-D-muramate + L-alanine + ATP = UDP-N-acetyl-alpha-D-muramoyl-L-alanine + ADP + phosphate + H(+)</text>
        <dbReference type="Rhea" id="RHEA:23372"/>
        <dbReference type="ChEBI" id="CHEBI:15378"/>
        <dbReference type="ChEBI" id="CHEBI:30616"/>
        <dbReference type="ChEBI" id="CHEBI:43474"/>
        <dbReference type="ChEBI" id="CHEBI:57972"/>
        <dbReference type="ChEBI" id="CHEBI:70757"/>
        <dbReference type="ChEBI" id="CHEBI:83898"/>
        <dbReference type="ChEBI" id="CHEBI:456216"/>
        <dbReference type="EC" id="6.3.2.8"/>
    </reaction>
</comment>
<comment type="pathway">
    <text evidence="1">Cell wall biogenesis; peptidoglycan biosynthesis.</text>
</comment>
<comment type="subcellular location">
    <subcellularLocation>
        <location evidence="1">Cytoplasm</location>
    </subcellularLocation>
</comment>
<comment type="similarity">
    <text evidence="1">Belongs to the MurCDEF family.</text>
</comment>
<name>MURC_PSEE4</name>
<feature type="chain" id="PRO_1000004388" description="UDP-N-acetylmuramate--L-alanine ligase">
    <location>
        <begin position="1"/>
        <end position="482"/>
    </location>
</feature>
<feature type="binding site" evidence="1">
    <location>
        <begin position="123"/>
        <end position="129"/>
    </location>
    <ligand>
        <name>ATP</name>
        <dbReference type="ChEBI" id="CHEBI:30616"/>
    </ligand>
</feature>
<organism>
    <name type="scientific">Pseudomonas entomophila (strain L48)</name>
    <dbReference type="NCBI Taxonomy" id="384676"/>
    <lineage>
        <taxon>Bacteria</taxon>
        <taxon>Pseudomonadati</taxon>
        <taxon>Pseudomonadota</taxon>
        <taxon>Gammaproteobacteria</taxon>
        <taxon>Pseudomonadales</taxon>
        <taxon>Pseudomonadaceae</taxon>
        <taxon>Pseudomonas</taxon>
    </lineage>
</organism>
<gene>
    <name evidence="1" type="primary">murC</name>
    <name type="ordered locus">PSEEN4484</name>
</gene>